<gene>
    <name evidence="1" type="primary">pepT</name>
    <name type="ordered locus">SGO_1312</name>
</gene>
<proteinExistence type="inferred from homology"/>
<feature type="chain" id="PRO_1000081965" description="Peptidase T">
    <location>
        <begin position="1"/>
        <end position="408"/>
    </location>
</feature>
<feature type="active site" evidence="1">
    <location>
        <position position="83"/>
    </location>
</feature>
<feature type="active site" description="Proton acceptor" evidence="1">
    <location>
        <position position="176"/>
    </location>
</feature>
<feature type="binding site" evidence="1">
    <location>
        <position position="81"/>
    </location>
    <ligand>
        <name>Zn(2+)</name>
        <dbReference type="ChEBI" id="CHEBI:29105"/>
        <label>1</label>
    </ligand>
</feature>
<feature type="binding site" evidence="1">
    <location>
        <position position="142"/>
    </location>
    <ligand>
        <name>Zn(2+)</name>
        <dbReference type="ChEBI" id="CHEBI:29105"/>
        <label>1</label>
    </ligand>
</feature>
<feature type="binding site" evidence="1">
    <location>
        <position position="142"/>
    </location>
    <ligand>
        <name>Zn(2+)</name>
        <dbReference type="ChEBI" id="CHEBI:29105"/>
        <label>2</label>
    </ligand>
</feature>
<feature type="binding site" evidence="1">
    <location>
        <position position="177"/>
    </location>
    <ligand>
        <name>Zn(2+)</name>
        <dbReference type="ChEBI" id="CHEBI:29105"/>
        <label>2</label>
    </ligand>
</feature>
<feature type="binding site" evidence="1">
    <location>
        <position position="199"/>
    </location>
    <ligand>
        <name>Zn(2+)</name>
        <dbReference type="ChEBI" id="CHEBI:29105"/>
        <label>1</label>
    </ligand>
</feature>
<feature type="binding site" evidence="1">
    <location>
        <position position="381"/>
    </location>
    <ligand>
        <name>Zn(2+)</name>
        <dbReference type="ChEBI" id="CHEBI:29105"/>
        <label>2</label>
    </ligand>
</feature>
<name>PEPT_STRGC</name>
<keyword id="KW-0031">Aminopeptidase</keyword>
<keyword id="KW-0963">Cytoplasm</keyword>
<keyword id="KW-0378">Hydrolase</keyword>
<keyword id="KW-0479">Metal-binding</keyword>
<keyword id="KW-0482">Metalloprotease</keyword>
<keyword id="KW-0645">Protease</keyword>
<keyword id="KW-1185">Reference proteome</keyword>
<keyword id="KW-0862">Zinc</keyword>
<reference key="1">
    <citation type="journal article" date="2007" name="J. Bacteriol.">
        <title>Genome-wide transcriptional changes in Streptococcus gordonii in response to competence signaling peptide.</title>
        <authorList>
            <person name="Vickerman M.M."/>
            <person name="Iobst S."/>
            <person name="Jesionowski A.M."/>
            <person name="Gill S.R."/>
        </authorList>
    </citation>
    <scope>NUCLEOTIDE SEQUENCE [LARGE SCALE GENOMIC DNA]</scope>
    <source>
        <strain>Challis / ATCC 35105 / BCRC 15272 / CH1 / DL1 / V288</strain>
    </source>
</reference>
<dbReference type="EC" id="3.4.11.4" evidence="1"/>
<dbReference type="EMBL" id="CP000725">
    <property type="protein sequence ID" value="ABV09487.1"/>
    <property type="molecule type" value="Genomic_DNA"/>
</dbReference>
<dbReference type="RefSeq" id="WP_012000700.1">
    <property type="nucleotide sequence ID" value="NC_009785.1"/>
</dbReference>
<dbReference type="SMR" id="A8AXT3"/>
<dbReference type="STRING" id="467705.SGO_1312"/>
<dbReference type="MEROPS" id="M20.003"/>
<dbReference type="KEGG" id="sgo:SGO_1312"/>
<dbReference type="eggNOG" id="COG2195">
    <property type="taxonomic scope" value="Bacteria"/>
</dbReference>
<dbReference type="HOGENOM" id="CLU_053676_0_0_9"/>
<dbReference type="Proteomes" id="UP000001131">
    <property type="component" value="Chromosome"/>
</dbReference>
<dbReference type="GO" id="GO:0005829">
    <property type="term" value="C:cytosol"/>
    <property type="evidence" value="ECO:0007669"/>
    <property type="project" value="TreeGrafter"/>
</dbReference>
<dbReference type="GO" id="GO:0008237">
    <property type="term" value="F:metallopeptidase activity"/>
    <property type="evidence" value="ECO:0007669"/>
    <property type="project" value="UniProtKB-KW"/>
</dbReference>
<dbReference type="GO" id="GO:0045148">
    <property type="term" value="F:tripeptide aminopeptidase activity"/>
    <property type="evidence" value="ECO:0007669"/>
    <property type="project" value="UniProtKB-UniRule"/>
</dbReference>
<dbReference type="GO" id="GO:0008270">
    <property type="term" value="F:zinc ion binding"/>
    <property type="evidence" value="ECO:0007669"/>
    <property type="project" value="UniProtKB-UniRule"/>
</dbReference>
<dbReference type="GO" id="GO:0043171">
    <property type="term" value="P:peptide catabolic process"/>
    <property type="evidence" value="ECO:0007669"/>
    <property type="project" value="UniProtKB-UniRule"/>
</dbReference>
<dbReference type="GO" id="GO:0006508">
    <property type="term" value="P:proteolysis"/>
    <property type="evidence" value="ECO:0007669"/>
    <property type="project" value="UniProtKB-UniRule"/>
</dbReference>
<dbReference type="CDD" id="cd03892">
    <property type="entry name" value="M20_peptT"/>
    <property type="match status" value="1"/>
</dbReference>
<dbReference type="FunFam" id="3.30.70.360:FF:000002">
    <property type="entry name" value="Peptidase T"/>
    <property type="match status" value="1"/>
</dbReference>
<dbReference type="Gene3D" id="3.30.70.360">
    <property type="match status" value="1"/>
</dbReference>
<dbReference type="Gene3D" id="3.40.630.10">
    <property type="entry name" value="Zn peptidases"/>
    <property type="match status" value="1"/>
</dbReference>
<dbReference type="HAMAP" id="MF_00550">
    <property type="entry name" value="Aminopeptidase_M20"/>
    <property type="match status" value="1"/>
</dbReference>
<dbReference type="InterPro" id="IPR001261">
    <property type="entry name" value="ArgE/DapE_CS"/>
</dbReference>
<dbReference type="InterPro" id="IPR036264">
    <property type="entry name" value="Bact_exopeptidase_dim_dom"/>
</dbReference>
<dbReference type="InterPro" id="IPR002933">
    <property type="entry name" value="Peptidase_M20"/>
</dbReference>
<dbReference type="InterPro" id="IPR011650">
    <property type="entry name" value="Peptidase_M20_dimer"/>
</dbReference>
<dbReference type="InterPro" id="IPR010161">
    <property type="entry name" value="Peptidase_M20B"/>
</dbReference>
<dbReference type="NCBIfam" id="TIGR01882">
    <property type="entry name" value="peptidase-T"/>
    <property type="match status" value="1"/>
</dbReference>
<dbReference type="NCBIfam" id="NF003976">
    <property type="entry name" value="PRK05469.1"/>
    <property type="match status" value="1"/>
</dbReference>
<dbReference type="NCBIfam" id="NF009920">
    <property type="entry name" value="PRK13381.1"/>
    <property type="match status" value="1"/>
</dbReference>
<dbReference type="PANTHER" id="PTHR42994">
    <property type="entry name" value="PEPTIDASE T"/>
    <property type="match status" value="1"/>
</dbReference>
<dbReference type="PANTHER" id="PTHR42994:SF1">
    <property type="entry name" value="PEPTIDASE T"/>
    <property type="match status" value="1"/>
</dbReference>
<dbReference type="Pfam" id="PF07687">
    <property type="entry name" value="M20_dimer"/>
    <property type="match status" value="1"/>
</dbReference>
<dbReference type="Pfam" id="PF01546">
    <property type="entry name" value="Peptidase_M20"/>
    <property type="match status" value="1"/>
</dbReference>
<dbReference type="PIRSF" id="PIRSF037215">
    <property type="entry name" value="Peptidase_M20B"/>
    <property type="match status" value="1"/>
</dbReference>
<dbReference type="SUPFAM" id="SSF55031">
    <property type="entry name" value="Bacterial exopeptidase dimerisation domain"/>
    <property type="match status" value="1"/>
</dbReference>
<dbReference type="SUPFAM" id="SSF53187">
    <property type="entry name" value="Zn-dependent exopeptidases"/>
    <property type="match status" value="1"/>
</dbReference>
<dbReference type="PROSITE" id="PS00758">
    <property type="entry name" value="ARGE_DAPE_CPG2_1"/>
    <property type="match status" value="1"/>
</dbReference>
<dbReference type="PROSITE" id="PS00759">
    <property type="entry name" value="ARGE_DAPE_CPG2_2"/>
    <property type="match status" value="1"/>
</dbReference>
<comment type="function">
    <text evidence="1">Cleaves the N-terminal amino acid of tripeptides.</text>
</comment>
<comment type="catalytic activity">
    <reaction evidence="1">
        <text>Release of the N-terminal residue from a tripeptide.</text>
        <dbReference type="EC" id="3.4.11.4"/>
    </reaction>
</comment>
<comment type="cofactor">
    <cofactor evidence="1">
        <name>Zn(2+)</name>
        <dbReference type="ChEBI" id="CHEBI:29105"/>
    </cofactor>
    <text evidence="1">Binds 2 Zn(2+) ions per subunit.</text>
</comment>
<comment type="subcellular location">
    <subcellularLocation>
        <location evidence="1">Cytoplasm</location>
    </subcellularLocation>
</comment>
<comment type="similarity">
    <text evidence="1">Belongs to the peptidase M20B family.</text>
</comment>
<evidence type="ECO:0000255" key="1">
    <source>
        <dbReference type="HAMAP-Rule" id="MF_00550"/>
    </source>
</evidence>
<accession>A8AXT3</accession>
<sequence>MKYPNLLERFLTYVKVNTRSDETSTTTPSTQSQMDFANNILIPEMKRVGLENVYYLPNGFAIGTLPANDPSFTLKIGFISHMDTADFNAENVQPQVIENYDGGVIPLGQSGFNLDPADFASLHKYKGQTLITTDGTTLLGADDKSGIAEIMTAIEYLSAHPEIKHGEIRVGFGPDEEIGIGADKFDAENFDVDFAYTVDGGPLGELQYETFSAAGAELTFQGRNVHPGTAKDQMINALQLAIDFHNQLPEADRPEKTEGYQGFYHLMNLTGTVEEAQASYIIRDFETDAFENRKAAMQAIADKMNQELGRERVILTLKDQYYNMKQVIEKDMTPIHIAKAVMESLDIQPIIEPIRGGTDGSKISFMGIPTPNLFAGGENMHGRFEYVSLETMERAVDTIIGIVSYQEK</sequence>
<protein>
    <recommendedName>
        <fullName evidence="1">Peptidase T</fullName>
        <ecNumber evidence="1">3.4.11.4</ecNumber>
    </recommendedName>
    <alternativeName>
        <fullName evidence="1">Aminotripeptidase</fullName>
        <shortName evidence="1">Tripeptidase</shortName>
    </alternativeName>
    <alternativeName>
        <fullName evidence="1">Tripeptide aminopeptidase</fullName>
    </alternativeName>
</protein>
<organism>
    <name type="scientific">Streptococcus gordonii (strain Challis / ATCC 35105 / BCRC 15272 / CH1 / DL1 / V288)</name>
    <dbReference type="NCBI Taxonomy" id="467705"/>
    <lineage>
        <taxon>Bacteria</taxon>
        <taxon>Bacillati</taxon>
        <taxon>Bacillota</taxon>
        <taxon>Bacilli</taxon>
        <taxon>Lactobacillales</taxon>
        <taxon>Streptococcaceae</taxon>
        <taxon>Streptococcus</taxon>
    </lineage>
</organism>